<organism>
    <name type="scientific">Brucella melitensis biotype 1 (strain ATCC 23456 / CCUG 17765 / NCTC 10094 / 16M)</name>
    <dbReference type="NCBI Taxonomy" id="224914"/>
    <lineage>
        <taxon>Bacteria</taxon>
        <taxon>Pseudomonadati</taxon>
        <taxon>Pseudomonadota</taxon>
        <taxon>Alphaproteobacteria</taxon>
        <taxon>Hyphomicrobiales</taxon>
        <taxon>Brucellaceae</taxon>
        <taxon>Brucella/Ochrobactrum group</taxon>
        <taxon>Brucella</taxon>
    </lineage>
</organism>
<sequence length="219" mass="24039">MTEQVQANETETPVAVADERIIRETGIDAKVAGIVEPVINTLGFRLVRVRLSGLNGQTLQIMAERPDGTMTVDDCELVSRTVAPVLDVEDPISGKYHLEISSPGIDRPLVRKSDFSDWAGHIAKVETSIVHEGRKKFRGRIVVGEADSVTIESDQISYGNEPVVRIPFDLISDARLVLTDDLIRDALRKDKALREGRIPGDDLGAEPEDAASTETQEKK</sequence>
<dbReference type="EMBL" id="AE008917">
    <property type="protein sequence ID" value="AAL53149.1"/>
    <property type="molecule type" value="Genomic_DNA"/>
</dbReference>
<dbReference type="PIR" id="AB3498">
    <property type="entry name" value="AB3498"/>
</dbReference>
<dbReference type="RefSeq" id="WP_002965224.1">
    <property type="nucleotide sequence ID" value="NZ_GG703778.1"/>
</dbReference>
<dbReference type="SMR" id="P67212"/>
<dbReference type="GeneID" id="97534585"/>
<dbReference type="KEGG" id="bme:BMEI1968"/>
<dbReference type="KEGG" id="bmel:DK63_1522"/>
<dbReference type="PATRIC" id="fig|224914.52.peg.1606"/>
<dbReference type="eggNOG" id="COG0779">
    <property type="taxonomic scope" value="Bacteria"/>
</dbReference>
<dbReference type="PhylomeDB" id="P67212"/>
<dbReference type="Proteomes" id="UP000000419">
    <property type="component" value="Chromosome I"/>
</dbReference>
<dbReference type="GO" id="GO:0005829">
    <property type="term" value="C:cytosol"/>
    <property type="evidence" value="ECO:0007669"/>
    <property type="project" value="TreeGrafter"/>
</dbReference>
<dbReference type="GO" id="GO:0000028">
    <property type="term" value="P:ribosomal small subunit assembly"/>
    <property type="evidence" value="ECO:0007669"/>
    <property type="project" value="TreeGrafter"/>
</dbReference>
<dbReference type="GO" id="GO:0006412">
    <property type="term" value="P:translation"/>
    <property type="evidence" value="ECO:0007669"/>
    <property type="project" value="TreeGrafter"/>
</dbReference>
<dbReference type="CDD" id="cd01734">
    <property type="entry name" value="YlxS_C"/>
    <property type="match status" value="1"/>
</dbReference>
<dbReference type="Gene3D" id="3.30.300.70">
    <property type="entry name" value="RimP-like superfamily, N-terminal"/>
    <property type="match status" value="1"/>
</dbReference>
<dbReference type="HAMAP" id="MF_01077">
    <property type="entry name" value="RimP"/>
    <property type="match status" value="1"/>
</dbReference>
<dbReference type="InterPro" id="IPR003728">
    <property type="entry name" value="Ribosome_maturation_RimP"/>
</dbReference>
<dbReference type="InterPro" id="IPR028998">
    <property type="entry name" value="RimP_C"/>
</dbReference>
<dbReference type="InterPro" id="IPR036847">
    <property type="entry name" value="RimP_C_sf"/>
</dbReference>
<dbReference type="InterPro" id="IPR028989">
    <property type="entry name" value="RimP_N"/>
</dbReference>
<dbReference type="InterPro" id="IPR035956">
    <property type="entry name" value="RimP_N_sf"/>
</dbReference>
<dbReference type="NCBIfam" id="NF000932">
    <property type="entry name" value="PRK00092.2-5"/>
    <property type="match status" value="1"/>
</dbReference>
<dbReference type="PANTHER" id="PTHR33867">
    <property type="entry name" value="RIBOSOME MATURATION FACTOR RIMP"/>
    <property type="match status" value="1"/>
</dbReference>
<dbReference type="PANTHER" id="PTHR33867:SF1">
    <property type="entry name" value="RIBOSOME MATURATION FACTOR RIMP"/>
    <property type="match status" value="1"/>
</dbReference>
<dbReference type="Pfam" id="PF17384">
    <property type="entry name" value="DUF150_C"/>
    <property type="match status" value="1"/>
</dbReference>
<dbReference type="Pfam" id="PF02576">
    <property type="entry name" value="RimP_N"/>
    <property type="match status" value="1"/>
</dbReference>
<dbReference type="SUPFAM" id="SSF74942">
    <property type="entry name" value="YhbC-like, C-terminal domain"/>
    <property type="match status" value="1"/>
</dbReference>
<dbReference type="SUPFAM" id="SSF75420">
    <property type="entry name" value="YhbC-like, N-terminal domain"/>
    <property type="match status" value="1"/>
</dbReference>
<comment type="function">
    <text evidence="1">Required for maturation of 30S ribosomal subunits.</text>
</comment>
<comment type="subcellular location">
    <subcellularLocation>
        <location evidence="1">Cytoplasm</location>
    </subcellularLocation>
</comment>
<comment type="similarity">
    <text evidence="1">Belongs to the RimP family.</text>
</comment>
<proteinExistence type="inferred from homology"/>
<keyword id="KW-0963">Cytoplasm</keyword>
<keyword id="KW-0690">Ribosome biogenesis</keyword>
<evidence type="ECO:0000255" key="1">
    <source>
        <dbReference type="HAMAP-Rule" id="MF_01077"/>
    </source>
</evidence>
<evidence type="ECO:0000256" key="2">
    <source>
        <dbReference type="SAM" id="MobiDB-lite"/>
    </source>
</evidence>
<protein>
    <recommendedName>
        <fullName evidence="1">Ribosome maturation factor RimP</fullName>
    </recommendedName>
</protein>
<name>RIMP_BRUME</name>
<reference key="1">
    <citation type="journal article" date="2002" name="Proc. Natl. Acad. Sci. U.S.A.">
        <title>The genome sequence of the facultative intracellular pathogen Brucella melitensis.</title>
        <authorList>
            <person name="DelVecchio V.G."/>
            <person name="Kapatral V."/>
            <person name="Redkar R.J."/>
            <person name="Patra G."/>
            <person name="Mujer C."/>
            <person name="Los T."/>
            <person name="Ivanova N."/>
            <person name="Anderson I."/>
            <person name="Bhattacharyya A."/>
            <person name="Lykidis A."/>
            <person name="Reznik G."/>
            <person name="Jablonski L."/>
            <person name="Larsen N."/>
            <person name="D'Souza M."/>
            <person name="Bernal A."/>
            <person name="Mazur M."/>
            <person name="Goltsman E."/>
            <person name="Selkov E."/>
            <person name="Elzer P.H."/>
            <person name="Hagius S."/>
            <person name="O'Callaghan D."/>
            <person name="Letesson J.-J."/>
            <person name="Haselkorn R."/>
            <person name="Kyrpides N.C."/>
            <person name="Overbeek R."/>
        </authorList>
    </citation>
    <scope>NUCLEOTIDE SEQUENCE [LARGE SCALE GENOMIC DNA]</scope>
    <source>
        <strain>ATCC 23456 / CCUG 17765 / NCTC 10094 / 16M</strain>
    </source>
</reference>
<feature type="chain" id="PRO_0000181854" description="Ribosome maturation factor RimP">
    <location>
        <begin position="1"/>
        <end position="219"/>
    </location>
</feature>
<feature type="region of interest" description="Disordered" evidence="2">
    <location>
        <begin position="195"/>
        <end position="219"/>
    </location>
</feature>
<gene>
    <name evidence="1" type="primary">rimP</name>
    <name type="ordered locus">BMEI1968</name>
</gene>
<accession>P67212</accession>
<accession>Q8FXT5</accession>
<accession>Q8YEB0</accession>